<feature type="chain" id="PRO_0000058659" description="14-3-3 protein 3">
    <location>
        <begin position="1"/>
        <end position="240"/>
    </location>
</feature>
<dbReference type="EMBL" id="U13420">
    <property type="protein sequence ID" value="AAA80187.1"/>
    <property type="molecule type" value="mRNA"/>
</dbReference>
<dbReference type="EMBL" id="AK418955">
    <property type="protein sequence ID" value="BAN37684.1"/>
    <property type="molecule type" value="mRNA"/>
</dbReference>
<dbReference type="EMBL" id="AK421164">
    <property type="protein sequence ID" value="BAN39731.1"/>
    <property type="molecule type" value="mRNA"/>
</dbReference>
<dbReference type="EMBL" id="AK419380">
    <property type="protein sequence ID" value="BAN38065.1"/>
    <property type="molecule type" value="mRNA"/>
</dbReference>
<dbReference type="EMBL" id="AK420547">
    <property type="protein sequence ID" value="BAN39154.1"/>
    <property type="molecule type" value="mRNA"/>
</dbReference>
<dbReference type="EMBL" id="AK420957">
    <property type="protein sequence ID" value="BAN39535.1"/>
    <property type="molecule type" value="mRNA"/>
</dbReference>
<dbReference type="EMBL" id="DS571197">
    <property type="protein sequence ID" value="EAL49075.1"/>
    <property type="molecule type" value="Genomic_DNA"/>
</dbReference>
<dbReference type="RefSeq" id="XP_654465.1">
    <property type="nucleotide sequence ID" value="XM_649373.2"/>
</dbReference>
<dbReference type="SMR" id="P42650"/>
<dbReference type="STRING" id="5759.C4M0F4"/>
<dbReference type="EnsemblProtists" id="GAT94640">
    <property type="protein sequence ID" value="GAT94640"/>
    <property type="gene ID" value="CL6EHI_006810"/>
</dbReference>
<dbReference type="EnsemblProtists" id="rna_EHI_006810-1">
    <property type="protein sequence ID" value="rna_EHI_006810-1"/>
    <property type="gene ID" value="EHI_006810"/>
</dbReference>
<dbReference type="GeneID" id="3408762"/>
<dbReference type="KEGG" id="ehi:EHI_006810"/>
<dbReference type="VEuPathDB" id="AmoebaDB:EHI5A_079140"/>
<dbReference type="VEuPathDB" id="AmoebaDB:EHI7A_046480"/>
<dbReference type="VEuPathDB" id="AmoebaDB:EHI8A_051570"/>
<dbReference type="VEuPathDB" id="AmoebaDB:EHI_006810"/>
<dbReference type="VEuPathDB" id="AmoebaDB:KM1_091240"/>
<dbReference type="eggNOG" id="KOG0841">
    <property type="taxonomic scope" value="Eukaryota"/>
</dbReference>
<dbReference type="HOGENOM" id="CLU_058290_0_0_1"/>
<dbReference type="OMA" id="KGCQLAR"/>
<dbReference type="OrthoDB" id="10260625at2759"/>
<dbReference type="Proteomes" id="UP000001926">
    <property type="component" value="Partially assembled WGS sequence"/>
</dbReference>
<dbReference type="GO" id="GO:0042995">
    <property type="term" value="C:cell projection"/>
    <property type="evidence" value="ECO:0007669"/>
    <property type="project" value="UniProtKB-KW"/>
</dbReference>
<dbReference type="GO" id="GO:0005737">
    <property type="term" value="C:cytoplasm"/>
    <property type="evidence" value="ECO:0000314"/>
    <property type="project" value="UniProtKB"/>
</dbReference>
<dbReference type="GO" id="GO:0001891">
    <property type="term" value="C:phagocytic cup"/>
    <property type="evidence" value="ECO:0000314"/>
    <property type="project" value="UniProtKB"/>
</dbReference>
<dbReference type="GO" id="GO:0006909">
    <property type="term" value="P:phagocytosis"/>
    <property type="evidence" value="ECO:0007669"/>
    <property type="project" value="UniProtKB-KW"/>
</dbReference>
<dbReference type="GO" id="GO:2000147">
    <property type="term" value="P:positive regulation of cell motility"/>
    <property type="evidence" value="ECO:0000315"/>
    <property type="project" value="UniProtKB"/>
</dbReference>
<dbReference type="GO" id="GO:0050766">
    <property type="term" value="P:positive regulation of phagocytosis"/>
    <property type="evidence" value="ECO:0000315"/>
    <property type="project" value="UniProtKB"/>
</dbReference>
<dbReference type="GO" id="GO:0008104">
    <property type="term" value="P:protein localization"/>
    <property type="evidence" value="ECO:0000318"/>
    <property type="project" value="GO_Central"/>
</dbReference>
<dbReference type="GO" id="GO:0007165">
    <property type="term" value="P:signal transduction"/>
    <property type="evidence" value="ECO:0000318"/>
    <property type="project" value="GO_Central"/>
</dbReference>
<dbReference type="FunFam" id="1.20.190.20:FF:000001">
    <property type="entry name" value="14-3-3 gamma 1"/>
    <property type="match status" value="1"/>
</dbReference>
<dbReference type="Gene3D" id="1.20.190.20">
    <property type="entry name" value="14-3-3 domain"/>
    <property type="match status" value="1"/>
</dbReference>
<dbReference type="InterPro" id="IPR000308">
    <property type="entry name" value="14-3-3"/>
</dbReference>
<dbReference type="InterPro" id="IPR023409">
    <property type="entry name" value="14-3-3_CS"/>
</dbReference>
<dbReference type="InterPro" id="IPR036815">
    <property type="entry name" value="14-3-3_dom_sf"/>
</dbReference>
<dbReference type="InterPro" id="IPR023410">
    <property type="entry name" value="14-3-3_domain"/>
</dbReference>
<dbReference type="PANTHER" id="PTHR18860">
    <property type="entry name" value="14-3-3 PROTEIN"/>
    <property type="match status" value="1"/>
</dbReference>
<dbReference type="Pfam" id="PF00244">
    <property type="entry name" value="14-3-3"/>
    <property type="match status" value="1"/>
</dbReference>
<dbReference type="PIRSF" id="PIRSF000868">
    <property type="entry name" value="14-3-3"/>
    <property type="match status" value="1"/>
</dbReference>
<dbReference type="PRINTS" id="PR00305">
    <property type="entry name" value="1433ZETA"/>
</dbReference>
<dbReference type="SMART" id="SM00101">
    <property type="entry name" value="14_3_3"/>
    <property type="match status" value="1"/>
</dbReference>
<dbReference type="SUPFAM" id="SSF48445">
    <property type="entry name" value="14-3-3 protein"/>
    <property type="match status" value="1"/>
</dbReference>
<dbReference type="PROSITE" id="PS00796">
    <property type="entry name" value="1433_1"/>
    <property type="match status" value="1"/>
</dbReference>
<dbReference type="PROSITE" id="PS00797">
    <property type="entry name" value="1433_2"/>
    <property type="match status" value="1"/>
</dbReference>
<sequence>MAESREDCVFLSKLAEQSERYDEMVQYMKQVAALNTELSVEERNLLSVAYKNVIGSRRASWRIITSLEQKEQAKGNDKHVEIIKGYRAKIEDELAKYCDDVLKVIKENLLPNASTSESKVFYKKMEGDYYRYYAEFTVDEKRQEVADKSLAAYTEATEISNADLAPTHPIRLGLALNFSVFYYEIMNDADKACQLAKQAFDDSIAKLDEVPESSYKDSTLIMQLLRDNLTLWTSDTADEE</sequence>
<proteinExistence type="evidence at protein level"/>
<organism evidence="7">
    <name type="scientific">Entamoeba histolytica (strain ATCC 30459 / HM-1:IMSS / ABRM)</name>
    <dbReference type="NCBI Taxonomy" id="294381"/>
    <lineage>
        <taxon>Eukaryota</taxon>
        <taxon>Amoebozoa</taxon>
        <taxon>Evosea</taxon>
        <taxon>Archamoebae</taxon>
        <taxon>Mastigamoebida</taxon>
        <taxon>Entamoebidae</taxon>
        <taxon>Entamoeba</taxon>
    </lineage>
</organism>
<evidence type="ECO:0000269" key="1">
    <source>
    </source>
</evidence>
<evidence type="ECO:0000269" key="2">
    <source>
    </source>
</evidence>
<evidence type="ECO:0000303" key="3">
    <source>
    </source>
</evidence>
<evidence type="ECO:0000305" key="4"/>
<evidence type="ECO:0000312" key="5">
    <source>
        <dbReference type="EMBL" id="AAA80187.1"/>
    </source>
</evidence>
<evidence type="ECO:0000312" key="6">
    <source>
        <dbReference type="EMBL" id="BAN37684.1"/>
    </source>
</evidence>
<evidence type="ECO:0000312" key="7">
    <source>
        <dbReference type="EMBL" id="EAL49075.1"/>
    </source>
</evidence>
<reference evidence="5" key="1">
    <citation type="submission" date="1994-08" db="EMBL/GenBank/DDBJ databases">
        <authorList>
            <person name="Samuelson J."/>
            <person name="Shen P."/>
            <person name="Meckler G."/>
            <person name="Descoteaux S."/>
            <person name="Fu H."/>
            <person name="Lohia A."/>
        </authorList>
    </citation>
    <scope>NUCLEOTIDE SEQUENCE [MRNA] OF 6-240</scope>
    <source>
        <strain evidence="5">ATCC 30459 / HM-1:IMSS / ABRM</strain>
    </source>
</reference>
<reference evidence="6" key="2">
    <citation type="submission" date="2012-06" db="EMBL/GenBank/DDBJ databases">
        <title>Short 5' UTR of Entamoeba genes.</title>
        <authorList>
            <person name="Hiranuka K."/>
            <person name="Kumagai M."/>
            <person name="Wakaguri H."/>
            <person name="Suzuki Y."/>
            <person name="Sugano S."/>
            <person name="Watanabe J."/>
            <person name="Makioka A."/>
        </authorList>
    </citation>
    <scope>NUCLEOTIDE SEQUENCE [MRNA]</scope>
    <source>
        <strain evidence="6">ATCC 30459 / HM-1:IMSS / ABRM</strain>
    </source>
</reference>
<reference evidence="7" key="3">
    <citation type="journal article" date="2005" name="Nature">
        <title>The genome of the protist parasite Entamoeba histolytica.</title>
        <authorList>
            <person name="Loftus B.J."/>
            <person name="Anderson I."/>
            <person name="Davies R."/>
            <person name="Alsmark U.C."/>
            <person name="Samuelson J."/>
            <person name="Amedeo P."/>
            <person name="Roncaglia P."/>
            <person name="Berriman M."/>
            <person name="Hirt R.P."/>
            <person name="Mann B.J."/>
            <person name="Nozaki T."/>
            <person name="Suh B."/>
            <person name="Pop M."/>
            <person name="Duchene M."/>
            <person name="Ackers J."/>
            <person name="Tannich E."/>
            <person name="Leippe M."/>
            <person name="Hofer M."/>
            <person name="Bruchhaus I."/>
            <person name="Willhoeft U."/>
            <person name="Bhattacharya A."/>
            <person name="Chillingworth T."/>
            <person name="Churcher C.M."/>
            <person name="Hance Z."/>
            <person name="Harris B."/>
            <person name="Harris D."/>
            <person name="Jagels K."/>
            <person name="Moule S."/>
            <person name="Mungall K.L."/>
            <person name="Ormond D."/>
            <person name="Squares R."/>
            <person name="Whitehead S."/>
            <person name="Quail M.A."/>
            <person name="Rabbinowitsch E."/>
            <person name="Norbertczak H."/>
            <person name="Price C."/>
            <person name="Wang Z."/>
            <person name="Guillen N."/>
            <person name="Gilchrist C."/>
            <person name="Stroup S.E."/>
            <person name="Bhattacharya S."/>
            <person name="Lohia A."/>
            <person name="Foster P.G."/>
            <person name="Sicheritz-Ponten T."/>
            <person name="Weber C."/>
            <person name="Singh U."/>
            <person name="Mukherjee C."/>
            <person name="El-Sayed N.M.A."/>
            <person name="Petri W.A."/>
            <person name="Clark C.G."/>
            <person name="Embley T.M."/>
            <person name="Barrell B.G."/>
            <person name="Fraser C.M."/>
            <person name="Hall N."/>
        </authorList>
    </citation>
    <scope>NUCLEOTIDE SEQUENCE [LARGE SCALE GENOMIC DNA]</scope>
    <source>
        <strain evidence="7">ATCC 30459 / HM-1:IMSS / ABRM</strain>
    </source>
</reference>
<reference key="4">
    <citation type="journal article" date="2019" name="PLoS Pathog.">
        <title>EhP3, a homolog of 14-3-3 family of protein participates in actin reorganization and phagocytosis in Entamoeba histolytica.</title>
        <authorList>
            <person name="Agarwal S."/>
            <person name="Anand G."/>
            <person name="Sharma S."/>
            <person name="Parimita Rath P."/>
            <person name="Gourinath S."/>
            <person name="Bhattacharya A."/>
        </authorList>
    </citation>
    <scope>FUNCTION</scope>
    <scope>INTERACTION WITH COACTOSIN</scope>
    <scope>SUBCELLULAR LOCATION</scope>
    <scope>DEVELOPMENTAL STAGE</scope>
    <scope>DISRUPTION PHENOTYPE</scope>
</reference>
<reference key="5">
    <citation type="journal article" date="2022" name="Front. Cell Dev. Biol.">
        <title>Unravelling the Biology of EhActo as the First Cofilin From Entamoeba histolytica.</title>
        <authorList>
            <person name="Kumar N."/>
            <person name="Rath P.P."/>
            <person name="Aggarwal P."/>
            <person name="Maiti S."/>
            <person name="Bhavesh N.S."/>
            <person name="Gourinath S."/>
        </authorList>
    </citation>
    <scope>INTERACTION WITH ACTO</scope>
</reference>
<gene>
    <name evidence="7" type="ORF">EHI_006810</name>
</gene>
<comment type="function">
    <text evidence="1">Adapter protein which is required for phagocytosis and motility, probably by regulating actin cytoskeleton dynamics (PubMed:31095644). During phagocytosis, plays a role in the initiation and/or formation of the phagocytic cup and is involved in the recruitment of the actin binding protein coactosin to the phagocytic cup (PubMed:31095644).</text>
</comment>
<comment type="subunit">
    <text evidence="1 2">Interacts with coactosin (PubMed:31095644). Interacts with ACTO/actophorin (PubMed:35281106).</text>
</comment>
<comment type="subcellular location">
    <subcellularLocation>
        <location evidence="1">Cytoplasm</location>
    </subcellularLocation>
    <subcellularLocation>
        <location evidence="1">Cell projection</location>
        <location evidence="1">Phagocytic cup</location>
    </subcellularLocation>
    <text evidence="1">During phagocytosis, recruited from the cytoplasm to the site of nucleation of the phagocytic cup and stays there for the subsequent steps until membrane closure and formation of the phagosome.</text>
</comment>
<comment type="developmental stage">
    <text evidence="1">Expressed in trophozoites (at protein level).</text>
</comment>
<comment type="disruption phenotype">
    <text evidence="1">RNAi-mediated knockdown reduces the rate of phagocytosis and motility (PubMed:31095644). Coactosin recruitment to the phagocytic cups is impaired (PubMed:31095644).</text>
</comment>
<comment type="similarity">
    <text evidence="4">Belongs to the 14-3-3 family.</text>
</comment>
<keyword id="KW-0966">Cell projection</keyword>
<keyword id="KW-0963">Cytoplasm</keyword>
<keyword id="KW-0581">Phagocytosis</keyword>
<keyword id="KW-1185">Reference proteome</keyword>
<name>14333_ENTH1</name>
<protein>
    <recommendedName>
        <fullName evidence="3">14-3-3 protein 3</fullName>
        <shortName evidence="4">14-3-3-3</shortName>
        <shortName evidence="3">EhP3</shortName>
    </recommendedName>
</protein>
<accession>P42650</accession>
<accession>A0A060N007</accession>
<accession>A0A175JLP8</accession>
<accession>C4M0F4</accession>